<sequence length="84" mass="9317">MKTLLLILVVVTIVCLDLVCCSRTCCNQQSSQPKTTTVCPDGEKSCYKKSWRDHRGTRSERGCGCPTVKPGVNRECCDTDECNN</sequence>
<accession>A6MFK6</accession>
<protein>
    <recommendedName>
        <fullName>Short neurotoxin SNTX-1</fullName>
    </recommendedName>
</protein>
<reference key="1">
    <citation type="journal article" date="2007" name="J. Proteome Res.">
        <title>Diversity of toxic components from the venom of the evolutionarily distinct black whip snake, Demansia vestigiata.</title>
        <authorList>
            <person name="St Pierre L."/>
            <person name="Birrell G.W."/>
            <person name="Earl S.T.H."/>
            <person name="Wallis T.P."/>
            <person name="Gorman J.J."/>
            <person name="de Jersey J."/>
            <person name="Masci P.P."/>
            <person name="Lavin M.F."/>
        </authorList>
    </citation>
    <scope>NUCLEOTIDE SEQUENCE [LARGE SCALE MRNA]</scope>
    <source>
        <tissue>Venom gland</tissue>
    </source>
</reference>
<organism>
    <name type="scientific">Demansia vestigiata</name>
    <name type="common">Lesser black whip snake</name>
    <name type="synonym">Demansia atra</name>
    <dbReference type="NCBI Taxonomy" id="412038"/>
    <lineage>
        <taxon>Eukaryota</taxon>
        <taxon>Metazoa</taxon>
        <taxon>Chordata</taxon>
        <taxon>Craniata</taxon>
        <taxon>Vertebrata</taxon>
        <taxon>Euteleostomi</taxon>
        <taxon>Lepidosauria</taxon>
        <taxon>Squamata</taxon>
        <taxon>Bifurcata</taxon>
        <taxon>Unidentata</taxon>
        <taxon>Episquamata</taxon>
        <taxon>Toxicofera</taxon>
        <taxon>Serpentes</taxon>
        <taxon>Colubroidea</taxon>
        <taxon>Elapidae</taxon>
        <taxon>Notechinae</taxon>
        <taxon>Demansia</taxon>
    </lineage>
</organism>
<name>3S11_DEMVE</name>
<dbReference type="EMBL" id="DQ917517">
    <property type="protein sequence ID" value="ABK63546.1"/>
    <property type="molecule type" value="mRNA"/>
</dbReference>
<dbReference type="SMR" id="A6MFK6"/>
<dbReference type="GO" id="GO:0005576">
    <property type="term" value="C:extracellular region"/>
    <property type="evidence" value="ECO:0007669"/>
    <property type="project" value="UniProtKB-SubCell"/>
</dbReference>
<dbReference type="GO" id="GO:0030550">
    <property type="term" value="F:acetylcholine receptor inhibitor activity"/>
    <property type="evidence" value="ECO:0007669"/>
    <property type="project" value="UniProtKB-KW"/>
</dbReference>
<dbReference type="GO" id="GO:0099106">
    <property type="term" value="F:ion channel regulator activity"/>
    <property type="evidence" value="ECO:0007669"/>
    <property type="project" value="UniProtKB-KW"/>
</dbReference>
<dbReference type="GO" id="GO:0090729">
    <property type="term" value="F:toxin activity"/>
    <property type="evidence" value="ECO:0007669"/>
    <property type="project" value="UniProtKB-KW"/>
</dbReference>
<dbReference type="CDD" id="cd00206">
    <property type="entry name" value="TFP_snake_toxin"/>
    <property type="match status" value="1"/>
</dbReference>
<dbReference type="FunFam" id="2.10.60.10:FF:000024">
    <property type="entry name" value="Cytotoxin 1"/>
    <property type="match status" value="1"/>
</dbReference>
<dbReference type="Gene3D" id="2.10.60.10">
    <property type="entry name" value="CD59"/>
    <property type="match status" value="1"/>
</dbReference>
<dbReference type="InterPro" id="IPR003571">
    <property type="entry name" value="Snake_3FTx"/>
</dbReference>
<dbReference type="InterPro" id="IPR045860">
    <property type="entry name" value="Snake_toxin-like_sf"/>
</dbReference>
<dbReference type="InterPro" id="IPR018354">
    <property type="entry name" value="Snake_toxin_con_site"/>
</dbReference>
<dbReference type="InterPro" id="IPR054131">
    <property type="entry name" value="Toxin_cobra-type"/>
</dbReference>
<dbReference type="Pfam" id="PF21947">
    <property type="entry name" value="Toxin_cobra-type"/>
    <property type="match status" value="1"/>
</dbReference>
<dbReference type="SUPFAM" id="SSF57302">
    <property type="entry name" value="Snake toxin-like"/>
    <property type="match status" value="1"/>
</dbReference>
<dbReference type="PROSITE" id="PS00272">
    <property type="entry name" value="SNAKE_TOXIN"/>
    <property type="match status" value="1"/>
</dbReference>
<keyword id="KW-0008">Acetylcholine receptor inhibiting toxin</keyword>
<keyword id="KW-1015">Disulfide bond</keyword>
<keyword id="KW-0872">Ion channel impairing toxin</keyword>
<keyword id="KW-0528">Neurotoxin</keyword>
<keyword id="KW-0629">Postsynaptic neurotoxin</keyword>
<keyword id="KW-0964">Secreted</keyword>
<keyword id="KW-0732">Signal</keyword>
<keyword id="KW-0800">Toxin</keyword>
<proteinExistence type="inferred from homology"/>
<evidence type="ECO:0000250" key="1"/>
<evidence type="ECO:0000250" key="2">
    <source>
        <dbReference type="UniProtKB" id="P0C1Z0"/>
    </source>
</evidence>
<evidence type="ECO:0000250" key="3">
    <source>
        <dbReference type="UniProtKB" id="P60775"/>
    </source>
</evidence>
<evidence type="ECO:0000255" key="4"/>
<evidence type="ECO:0000305" key="5"/>
<comment type="function">
    <text evidence="3">Binds to muscle nicotinic acetylcholine receptor (nAChR) and inhibit acetylcholine from binding to the receptor, thereby impairing neuromuscular transmission.</text>
</comment>
<comment type="subcellular location">
    <subcellularLocation>
        <location evidence="1">Secreted</location>
    </subcellularLocation>
</comment>
<comment type="tissue specificity">
    <text evidence="5">Expressed by the venom gland.</text>
</comment>
<comment type="similarity">
    <text evidence="5">Belongs to the three-finger toxin family. Short-chain subfamily. Type I alpha-neurotoxin sub-subfamily.</text>
</comment>
<feature type="signal peptide" evidence="4">
    <location>
        <begin position="1"/>
        <end position="21"/>
    </location>
</feature>
<feature type="chain" id="PRO_5000254110" description="Short neurotoxin SNTX-1">
    <location>
        <begin position="22"/>
        <end position="84"/>
    </location>
</feature>
<feature type="disulfide bond" evidence="2">
    <location>
        <begin position="25"/>
        <end position="46"/>
    </location>
</feature>
<feature type="disulfide bond" evidence="2">
    <location>
        <begin position="39"/>
        <end position="63"/>
    </location>
</feature>
<feature type="disulfide bond" evidence="2">
    <location>
        <begin position="65"/>
        <end position="76"/>
    </location>
</feature>
<feature type="disulfide bond" evidence="2">
    <location>
        <begin position="77"/>
        <end position="82"/>
    </location>
</feature>